<organism>
    <name type="scientific">Solanum lycopersicum</name>
    <name type="common">Tomato</name>
    <name type="synonym">Lycopersicon esculentum</name>
    <dbReference type="NCBI Taxonomy" id="4081"/>
    <lineage>
        <taxon>Eukaryota</taxon>
        <taxon>Viridiplantae</taxon>
        <taxon>Streptophyta</taxon>
        <taxon>Embryophyta</taxon>
        <taxon>Tracheophyta</taxon>
        <taxon>Spermatophyta</taxon>
        <taxon>Magnoliopsida</taxon>
        <taxon>eudicotyledons</taxon>
        <taxon>Gunneridae</taxon>
        <taxon>Pentapetalae</taxon>
        <taxon>asterids</taxon>
        <taxon>lamiids</taxon>
        <taxon>Solanales</taxon>
        <taxon>Solanaceae</taxon>
        <taxon>Solanoideae</taxon>
        <taxon>Solaneae</taxon>
        <taxon>Solanum</taxon>
        <taxon>Solanum subgen. Lycopersicon</taxon>
    </lineage>
</organism>
<comment type="function">
    <text evidence="1">Translation factor that promotes translation elongation and termination, particularly upon ribosome stalling at specific amino acid sequence contexts (By similarity). Binds between the exit (E) and peptidyl (P) site of the ribosome and promotes rescue of stalled ribosome: specifically required for efficient translation of polyproline-containing peptides as well as other motifs that stall the ribosome (By similarity). Acts as a ribosome quality control (RQC) cofactor by joining the RQC complex to facilitate peptidyl transfer during CAT tailing step (By similarity).</text>
</comment>
<comment type="PTM">
    <text evidence="2">Lys-52 undergoes hypusination, a unique post-translational modification that consists in the addition of a butylamino group from spermidine to lysine side chain, leading to the formation of the unusual amino acid hypusine. eIF-5As are the only known proteins to undergo this modification, which is essential for their function.</text>
</comment>
<comment type="similarity">
    <text evidence="4">Belongs to the eIF-5A family.</text>
</comment>
<dbReference type="EMBL" id="AF296084">
    <property type="protein sequence ID" value="AAG53648.1"/>
    <property type="molecule type" value="mRNA"/>
</dbReference>
<dbReference type="RefSeq" id="NP_001234503.1">
    <property type="nucleotide sequence ID" value="NM_001247574.2"/>
</dbReference>
<dbReference type="SMR" id="Q9AXQ5"/>
<dbReference type="FunCoup" id="Q9AXQ5">
    <property type="interactions" value="1946"/>
</dbReference>
<dbReference type="STRING" id="4081.Q9AXQ5"/>
<dbReference type="PaxDb" id="4081-Solyc07g005560.2.1"/>
<dbReference type="EnsemblPlants" id="Solyc07g005560.3.1">
    <property type="protein sequence ID" value="Solyc07g005560.3.1"/>
    <property type="gene ID" value="Solyc07g005560.3"/>
</dbReference>
<dbReference type="GeneID" id="543668"/>
<dbReference type="Gramene" id="Solyc07g005560.3.1">
    <property type="protein sequence ID" value="Solyc07g005560.3.1"/>
    <property type="gene ID" value="Solyc07g005560.3"/>
</dbReference>
<dbReference type="KEGG" id="sly:543668"/>
<dbReference type="eggNOG" id="KOG3271">
    <property type="taxonomic scope" value="Eukaryota"/>
</dbReference>
<dbReference type="HOGENOM" id="CLU_102600_1_0_1"/>
<dbReference type="InParanoid" id="Q9AXQ5"/>
<dbReference type="OMA" id="TIMINIQ"/>
<dbReference type="OrthoDB" id="9975114at2759"/>
<dbReference type="PhylomeDB" id="Q9AXQ5"/>
<dbReference type="Proteomes" id="UP000004994">
    <property type="component" value="Chromosome 7"/>
</dbReference>
<dbReference type="GO" id="GO:0043022">
    <property type="term" value="F:ribosome binding"/>
    <property type="evidence" value="ECO:0007669"/>
    <property type="project" value="InterPro"/>
</dbReference>
<dbReference type="GO" id="GO:0003723">
    <property type="term" value="F:RNA binding"/>
    <property type="evidence" value="ECO:0007669"/>
    <property type="project" value="InterPro"/>
</dbReference>
<dbReference type="GO" id="GO:0003746">
    <property type="term" value="F:translation elongation factor activity"/>
    <property type="evidence" value="ECO:0000318"/>
    <property type="project" value="GO_Central"/>
</dbReference>
<dbReference type="GO" id="GO:0003743">
    <property type="term" value="F:translation initiation factor activity"/>
    <property type="evidence" value="ECO:0007669"/>
    <property type="project" value="UniProtKB-KW"/>
</dbReference>
<dbReference type="GO" id="GO:0045901">
    <property type="term" value="P:positive regulation of translational elongation"/>
    <property type="evidence" value="ECO:0007669"/>
    <property type="project" value="InterPro"/>
</dbReference>
<dbReference type="GO" id="GO:0045905">
    <property type="term" value="P:positive regulation of translational termination"/>
    <property type="evidence" value="ECO:0007669"/>
    <property type="project" value="InterPro"/>
</dbReference>
<dbReference type="GO" id="GO:0006414">
    <property type="term" value="P:translational elongation"/>
    <property type="evidence" value="ECO:0000318"/>
    <property type="project" value="GO_Central"/>
</dbReference>
<dbReference type="CDD" id="cd04468">
    <property type="entry name" value="S1_eIF5A"/>
    <property type="match status" value="1"/>
</dbReference>
<dbReference type="FunFam" id="2.30.30.30:FF:000012">
    <property type="entry name" value="Eukaryotic translation initiation factor 5A"/>
    <property type="match status" value="1"/>
</dbReference>
<dbReference type="FunFam" id="2.40.50.140:FF:000034">
    <property type="entry name" value="Eukaryotic translation initiation factor 5A"/>
    <property type="match status" value="1"/>
</dbReference>
<dbReference type="Gene3D" id="2.30.30.30">
    <property type="match status" value="1"/>
</dbReference>
<dbReference type="Gene3D" id="2.40.50.140">
    <property type="entry name" value="Nucleic acid-binding proteins"/>
    <property type="match status" value="1"/>
</dbReference>
<dbReference type="InterPro" id="IPR001884">
    <property type="entry name" value="IF5A-like"/>
</dbReference>
<dbReference type="InterPro" id="IPR048670">
    <property type="entry name" value="IF5A-like_N"/>
</dbReference>
<dbReference type="InterPro" id="IPR012340">
    <property type="entry name" value="NA-bd_OB-fold"/>
</dbReference>
<dbReference type="InterPro" id="IPR014722">
    <property type="entry name" value="Rib_uL2_dom2"/>
</dbReference>
<dbReference type="InterPro" id="IPR019769">
    <property type="entry name" value="Trans_elong_IF5A_hypusine_site"/>
</dbReference>
<dbReference type="InterPro" id="IPR020189">
    <property type="entry name" value="Transl_elong_IF5A_C"/>
</dbReference>
<dbReference type="InterPro" id="IPR008991">
    <property type="entry name" value="Translation_prot_SH3-like_sf"/>
</dbReference>
<dbReference type="NCBIfam" id="TIGR00037">
    <property type="entry name" value="eIF_5A"/>
    <property type="match status" value="1"/>
</dbReference>
<dbReference type="PANTHER" id="PTHR11673">
    <property type="entry name" value="TRANSLATION INITIATION FACTOR 5A FAMILY MEMBER"/>
    <property type="match status" value="1"/>
</dbReference>
<dbReference type="Pfam" id="PF01287">
    <property type="entry name" value="eIF-5a"/>
    <property type="match status" value="1"/>
</dbReference>
<dbReference type="Pfam" id="PF21485">
    <property type="entry name" value="IF5A-like_N"/>
    <property type="match status" value="1"/>
</dbReference>
<dbReference type="PIRSF" id="PIRSF003025">
    <property type="entry name" value="eIF5A"/>
    <property type="match status" value="1"/>
</dbReference>
<dbReference type="SMART" id="SM01376">
    <property type="entry name" value="eIF-5a"/>
    <property type="match status" value="1"/>
</dbReference>
<dbReference type="SUPFAM" id="SSF50249">
    <property type="entry name" value="Nucleic acid-binding proteins"/>
    <property type="match status" value="1"/>
</dbReference>
<dbReference type="SUPFAM" id="SSF50104">
    <property type="entry name" value="Translation proteins SH3-like domain"/>
    <property type="match status" value="1"/>
</dbReference>
<dbReference type="PROSITE" id="PS00302">
    <property type="entry name" value="IF5A_HYPUSINE"/>
    <property type="match status" value="1"/>
</dbReference>
<evidence type="ECO:0000250" key="1">
    <source>
        <dbReference type="UniProtKB" id="P23301"/>
    </source>
</evidence>
<evidence type="ECO:0000250" key="2">
    <source>
        <dbReference type="UniProtKB" id="Q9XI91"/>
    </source>
</evidence>
<evidence type="ECO:0000256" key="3">
    <source>
        <dbReference type="SAM" id="MobiDB-lite"/>
    </source>
</evidence>
<evidence type="ECO:0000305" key="4"/>
<accession>Q9AXQ5</accession>
<keyword id="KW-0385">Hypusine</keyword>
<keyword id="KW-0396">Initiation factor</keyword>
<keyword id="KW-0648">Protein biosynthesis</keyword>
<keyword id="KW-1185">Reference proteome</keyword>
<protein>
    <recommendedName>
        <fullName>Eukaryotic translation initiation factor 5A-2</fullName>
        <shortName>eIF-5A-2</shortName>
    </recommendedName>
</protein>
<proteinExistence type="evidence at transcript level"/>
<name>IF5A2_SOLLC</name>
<feature type="chain" id="PRO_0000142468" description="Eukaryotic translation initiation factor 5A-2">
    <location>
        <begin position="1"/>
        <end position="160"/>
    </location>
</feature>
<feature type="region of interest" description="Disordered" evidence="3">
    <location>
        <begin position="1"/>
        <end position="21"/>
    </location>
</feature>
<feature type="compositionally biased region" description="Basic and acidic residues" evidence="3">
    <location>
        <begin position="1"/>
        <end position="12"/>
    </location>
</feature>
<feature type="modified residue" description="Hypusine" evidence="2">
    <location>
        <position position="52"/>
    </location>
</feature>
<sequence length="160" mass="17554">MSDEEHHFESKADAGASKTFPQQAGTIRKNGYIVIKGRPCKVVEVSTSKTGKHGHAKCHFVAIDIFNGKKLEDIVPSSHNCDVPHVNRTDYQLIDISEDGFVSLLTESGNTKDDLRLPTDENLLKQVKDGFQEGKDLVVSVMSAMGEEQINAVKDVGTKN</sequence>
<reference key="1">
    <citation type="journal article" date="2001" name="J. Biol. Chem.">
        <title>Isolation and characterization of senescence-induced cDNAs encoding deoxyhypusine synthase and eucaryotic translation initiation factor 5A from tomato.</title>
        <authorList>
            <person name="Wang T.-W."/>
            <person name="Lu L."/>
            <person name="Wang D."/>
            <person name="Thompson J.E."/>
        </authorList>
    </citation>
    <scope>NUCLEOTIDE SEQUENCE [MRNA]</scope>
    <source>
        <strain>cv. Match</strain>
    </source>
</reference>